<keyword id="KW-0067">ATP-binding</keyword>
<keyword id="KW-0347">Helicase</keyword>
<keyword id="KW-0378">Hydrolase</keyword>
<keyword id="KW-0511">Multifunctional enzyme</keyword>
<keyword id="KW-0547">Nucleotide-binding</keyword>
<keyword id="KW-0548">Nucleotidyltransferase</keyword>
<keyword id="KW-0696">RNA-directed RNA polymerase</keyword>
<keyword id="KW-0808">Transferase</keyword>
<keyword id="KW-0693">Viral RNA replication</keyword>
<protein>
    <recommendedName>
        <fullName>RNA replication protein</fullName>
    </recommendedName>
    <alternativeName>
        <fullName>ORF 1 protein</fullName>
    </alternativeName>
    <domain>
        <recommendedName>
            <fullName>RNA-directed RNA polymerase</fullName>
            <ecNumber>2.7.7.48</ecNumber>
        </recommendedName>
    </domain>
    <domain>
        <recommendedName>
            <fullName>Helicase</fullName>
            <ecNumber>3.6.4.13</ecNumber>
        </recommendedName>
    </domain>
</protein>
<dbReference type="EC" id="2.7.7.48"/>
<dbReference type="EC" id="3.6.4.13"/>
<dbReference type="EMBL" id="S60150">
    <property type="protein sequence ID" value="AAB20076.2"/>
    <property type="molecule type" value="Genomic_RNA"/>
</dbReference>
<dbReference type="PIR" id="JQ1246">
    <property type="entry name" value="JQ1246"/>
</dbReference>
<dbReference type="SMR" id="P37987"/>
<dbReference type="GO" id="GO:0005524">
    <property type="term" value="F:ATP binding"/>
    <property type="evidence" value="ECO:0007669"/>
    <property type="project" value="UniProtKB-KW"/>
</dbReference>
<dbReference type="GO" id="GO:0016887">
    <property type="term" value="F:ATP hydrolysis activity"/>
    <property type="evidence" value="ECO:0007669"/>
    <property type="project" value="RHEA"/>
</dbReference>
<dbReference type="GO" id="GO:0003723">
    <property type="term" value="F:RNA binding"/>
    <property type="evidence" value="ECO:0007669"/>
    <property type="project" value="InterPro"/>
</dbReference>
<dbReference type="GO" id="GO:0003724">
    <property type="term" value="F:RNA helicase activity"/>
    <property type="evidence" value="ECO:0007669"/>
    <property type="project" value="UniProtKB-EC"/>
</dbReference>
<dbReference type="GO" id="GO:0003968">
    <property type="term" value="F:RNA-directed RNA polymerase activity"/>
    <property type="evidence" value="ECO:0007669"/>
    <property type="project" value="UniProtKB-KW"/>
</dbReference>
<dbReference type="GO" id="GO:0006351">
    <property type="term" value="P:DNA-templated transcription"/>
    <property type="evidence" value="ECO:0007669"/>
    <property type="project" value="InterPro"/>
</dbReference>
<dbReference type="GO" id="GO:0039694">
    <property type="term" value="P:viral RNA genome replication"/>
    <property type="evidence" value="ECO:0007669"/>
    <property type="project" value="InterPro"/>
</dbReference>
<dbReference type="InterPro" id="IPR043502">
    <property type="entry name" value="DNA/RNA_pol_sf"/>
</dbReference>
<dbReference type="InterPro" id="IPR001788">
    <property type="entry name" value="RNA-dep_RNA_pol_alsuvir"/>
</dbReference>
<dbReference type="InterPro" id="IPR007094">
    <property type="entry name" value="RNA-dir_pol_PSvirus"/>
</dbReference>
<dbReference type="Pfam" id="PF00978">
    <property type="entry name" value="RdRP_2"/>
    <property type="match status" value="1"/>
</dbReference>
<dbReference type="SUPFAM" id="SSF56672">
    <property type="entry name" value="DNA/RNA polymerases"/>
    <property type="match status" value="1"/>
</dbReference>
<dbReference type="PROSITE" id="PS50507">
    <property type="entry name" value="RDRP_SSRNA_POS"/>
    <property type="match status" value="1"/>
</dbReference>
<proteinExistence type="inferred from homology"/>
<reference key="1">
    <citation type="journal article" date="1991" name="J. Gen. Virol.">
        <title>Nucleotide sequence and gene organization of the 3'-terminal region of chrysanthemum virus B genomic RNA.</title>
        <authorList>
            <person name="Levay K."/>
            <person name="Zavriev S."/>
        </authorList>
    </citation>
    <scope>NUCLEOTIDE SEQUENCE [GENOMIC RNA]</scope>
</reference>
<accession>P37987</accession>
<sequence length="260" mass="30159">PYMRYIEAKLHEVLPSRFYIHSGKGLEELNEWVIKGKFEGICTESDYEAFDASQDQYIVAFELALMEYLGLPRDLIEDYAFIKCHLGSKLGNFAIMRFSGEASTFLFNTMANMLFTFLRYNIKDSEHICFAGDDMCASERLCIKKEHEGFLNKLKLKAKVFFVDKPTFCGWHLCPDGIYKKPQLVLERMCIAKEKNNLANCLDNYAIEVSYAYKLGERAVNRMDEEELEAAYNCVRIIIKNKKLLKSDILGFYSNIEKQI</sequence>
<organismHost>
    <name type="scientific">Chrysanthemum morifolium</name>
    <name type="common">Florist's daisy</name>
    <name type="synonym">Dendranthema grandiflorum</name>
    <dbReference type="NCBI Taxonomy" id="41568"/>
</organismHost>
<organismHost>
    <name type="scientific">Gynura</name>
    <dbReference type="NCBI Taxonomy" id="109564"/>
</organismHost>
<comment type="function">
    <text>RNA replication. The central part of this protein possibly functions as an ATP-binding helicase.</text>
</comment>
<comment type="catalytic activity">
    <reaction evidence="1">
        <text>RNA(n) + a ribonucleoside 5'-triphosphate = RNA(n+1) + diphosphate</text>
        <dbReference type="Rhea" id="RHEA:21248"/>
        <dbReference type="Rhea" id="RHEA-COMP:14527"/>
        <dbReference type="Rhea" id="RHEA-COMP:17342"/>
        <dbReference type="ChEBI" id="CHEBI:33019"/>
        <dbReference type="ChEBI" id="CHEBI:61557"/>
        <dbReference type="ChEBI" id="CHEBI:140395"/>
        <dbReference type="EC" id="2.7.7.48"/>
    </reaction>
</comment>
<comment type="catalytic activity">
    <reaction>
        <text>ATP + H2O = ADP + phosphate + H(+)</text>
        <dbReference type="Rhea" id="RHEA:13065"/>
        <dbReference type="ChEBI" id="CHEBI:15377"/>
        <dbReference type="ChEBI" id="CHEBI:15378"/>
        <dbReference type="ChEBI" id="CHEBI:30616"/>
        <dbReference type="ChEBI" id="CHEBI:43474"/>
        <dbReference type="ChEBI" id="CHEBI:456216"/>
        <dbReference type="EC" id="3.6.4.13"/>
    </reaction>
</comment>
<comment type="similarity">
    <text evidence="2">Belongs to the potexviruses/carlaviruses RNA replication protein family.</text>
</comment>
<organism>
    <name type="scientific">Chrysanthemum virus B</name>
    <name type="common">CVB</name>
    <dbReference type="NCBI Taxonomy" id="12165"/>
    <lineage>
        <taxon>Viruses</taxon>
        <taxon>Riboviria</taxon>
        <taxon>Orthornavirae</taxon>
        <taxon>Kitrinoviricota</taxon>
        <taxon>Alsuviricetes</taxon>
        <taxon>Tymovirales</taxon>
        <taxon>Betaflexiviridae</taxon>
        <taxon>Quinvirinae</taxon>
        <taxon>Carlavirus</taxon>
    </lineage>
</organism>
<feature type="chain" id="PRO_0000222560" description="RNA replication protein">
    <location>
        <begin position="1" status="less than"/>
        <end position="260"/>
    </location>
</feature>
<feature type="domain" description="RdRp catalytic" evidence="1">
    <location>
        <begin position="40"/>
        <end position="147"/>
    </location>
</feature>
<feature type="non-terminal residue">
    <location>
        <position position="1"/>
    </location>
</feature>
<name>RDRP_CVB</name>
<evidence type="ECO:0000255" key="1">
    <source>
        <dbReference type="PROSITE-ProRule" id="PRU00539"/>
    </source>
</evidence>
<evidence type="ECO:0000305" key="2"/>